<dbReference type="EMBL" id="AF082977">
    <property type="protein sequence ID" value="AAD40969.1"/>
    <property type="molecule type" value="mRNA"/>
</dbReference>
<dbReference type="EMBL" id="AF204971">
    <property type="protein sequence ID" value="AAF75222.1"/>
    <property type="molecule type" value="Genomic_DNA"/>
</dbReference>
<dbReference type="SMR" id="Q9W7K0"/>
<dbReference type="Proteomes" id="UP000472273">
    <property type="component" value="Unplaced"/>
</dbReference>
<dbReference type="GO" id="GO:0005576">
    <property type="term" value="C:extracellular region"/>
    <property type="evidence" value="ECO:0007669"/>
    <property type="project" value="UniProtKB-SubCell"/>
</dbReference>
<dbReference type="GO" id="GO:0030550">
    <property type="term" value="F:acetylcholine receptor inhibitor activity"/>
    <property type="evidence" value="ECO:0007669"/>
    <property type="project" value="UniProtKB-KW"/>
</dbReference>
<dbReference type="GO" id="GO:0099106">
    <property type="term" value="F:ion channel regulator activity"/>
    <property type="evidence" value="ECO:0007669"/>
    <property type="project" value="UniProtKB-KW"/>
</dbReference>
<dbReference type="GO" id="GO:0090729">
    <property type="term" value="F:toxin activity"/>
    <property type="evidence" value="ECO:0007669"/>
    <property type="project" value="UniProtKB-KW"/>
</dbReference>
<dbReference type="CDD" id="cd00206">
    <property type="entry name" value="TFP_snake_toxin"/>
    <property type="match status" value="1"/>
</dbReference>
<dbReference type="Gene3D" id="2.10.60.10">
    <property type="entry name" value="CD59"/>
    <property type="match status" value="1"/>
</dbReference>
<dbReference type="InterPro" id="IPR003571">
    <property type="entry name" value="Snake_3FTx"/>
</dbReference>
<dbReference type="InterPro" id="IPR045860">
    <property type="entry name" value="Snake_toxin-like_sf"/>
</dbReference>
<dbReference type="SUPFAM" id="SSF57302">
    <property type="entry name" value="Snake toxin-like"/>
    <property type="match status" value="1"/>
</dbReference>
<organism>
    <name type="scientific">Pseudonaja textilis</name>
    <name type="common">Eastern brown snake</name>
    <dbReference type="NCBI Taxonomy" id="8673"/>
    <lineage>
        <taxon>Eukaryota</taxon>
        <taxon>Metazoa</taxon>
        <taxon>Chordata</taxon>
        <taxon>Craniata</taxon>
        <taxon>Vertebrata</taxon>
        <taxon>Euteleostomi</taxon>
        <taxon>Lepidosauria</taxon>
        <taxon>Squamata</taxon>
        <taxon>Bifurcata</taxon>
        <taxon>Unidentata</taxon>
        <taxon>Episquamata</taxon>
        <taxon>Toxicofera</taxon>
        <taxon>Serpentes</taxon>
        <taxon>Colubroidea</taxon>
        <taxon>Elapidae</taxon>
        <taxon>Hydrophiinae</taxon>
        <taxon>Pseudonaja</taxon>
    </lineage>
</organism>
<reference key="1">
    <citation type="journal article" date="1999" name="Eur. J. Biochem.">
        <title>Postsynaptic short-chain neurotoxins from Pseudonaja textilis: cDNA cloning, expression and protein characterization.</title>
        <authorList>
            <person name="Gong N.L."/>
            <person name="Armugam A."/>
            <person name="Jeyaseelan K."/>
        </authorList>
    </citation>
    <scope>NUCLEOTIDE SEQUENCE [MRNA]</scope>
    <scope>FUNCTION</scope>
    <scope>TOXIC DOSE</scope>
    <source>
        <tissue>Venom gland</tissue>
    </source>
</reference>
<reference key="2">
    <citation type="journal article" date="2000" name="FEBS Lett.">
        <title>Molecular cloning, characterization and evolution of the genes encoding a new group of short-chain alpha-neurotoxins in an Australian elapid, Pseudonaja textilis.</title>
        <authorList>
            <person name="Gong N.L."/>
            <person name="Armugam A."/>
            <person name="Jeyaseelan K."/>
        </authorList>
    </citation>
    <scope>NUCLEOTIDE SEQUENCE [GENOMIC DNA]</scope>
    <source>
        <tissue>Liver</tissue>
    </source>
</reference>
<reference key="3">
    <citation type="journal article" date="2006" name="Mol. Cell. Proteomics">
        <title>Molecular diversity in venom from the Australian Brown snake, Pseudonaja textilis.</title>
        <authorList>
            <person name="Birrell G.W."/>
            <person name="Earl S."/>
            <person name="Masci P.P."/>
            <person name="de Jersey J."/>
            <person name="Wallis T.P."/>
            <person name="Gorman J.J."/>
            <person name="Lavin M.F."/>
        </authorList>
    </citation>
    <scope>IDENTIFICATION BY MASS SPECTROMETRY</scope>
    <scope>SUBCELLULAR LOCATION</scope>
    <source>
        <tissue>Venom</tissue>
    </source>
</reference>
<feature type="signal peptide" evidence="1">
    <location>
        <begin position="1"/>
        <end position="21"/>
    </location>
</feature>
<feature type="chain" id="PRO_0000035463" description="Short neurotoxin 3">
    <location>
        <begin position="22"/>
        <end position="79"/>
    </location>
</feature>
<feature type="disulfide bond" evidence="2">
    <location>
        <begin position="24"/>
        <end position="41"/>
    </location>
</feature>
<feature type="disulfide bond" evidence="2">
    <location>
        <begin position="34"/>
        <end position="59"/>
    </location>
</feature>
<feature type="disulfide bond" evidence="2">
    <location>
        <begin position="63"/>
        <end position="71"/>
    </location>
</feature>
<feature type="disulfide bond" evidence="2">
    <location>
        <begin position="72"/>
        <end position="77"/>
    </location>
</feature>
<proteinExistence type="evidence at protein level"/>
<accession>Q9W7K0</accession>
<sequence>MKTLLLTLVMVTIMCLDLGYTLTCYKGYHDTVVCKPHETICYRYLVPATHGNAIPARGCGTSCPGGNHPVCCSTDLCNK</sequence>
<name>3S33_PSETE</name>
<evidence type="ECO:0000250" key="1"/>
<evidence type="ECO:0000250" key="2">
    <source>
        <dbReference type="UniProtKB" id="P60301"/>
    </source>
</evidence>
<evidence type="ECO:0000269" key="3">
    <source>
    </source>
</evidence>
<evidence type="ECO:0000269" key="4">
    <source>
    </source>
</evidence>
<evidence type="ECO:0000305" key="5"/>
<evidence type="ECO:0000305" key="6">
    <source>
    </source>
</evidence>
<comment type="function">
    <text evidence="3">Binds with high affinity to muscle nicotinic acetylcholine receptor (nAChR) and hinders acetylcholine binding to the receptor, thereby impairing neuromuscular transmission. Competes with the binding of alpha-bungarotoxin on muscle AChR (from Torpedo) with an IC(50) of 0.30 uM. Causes muscle paralysis, spasms and increased respiration.</text>
</comment>
<comment type="subcellular location">
    <subcellularLocation>
        <location evidence="4">Secreted</location>
    </subcellularLocation>
</comment>
<comment type="tissue specificity">
    <text evidence="6">Expressed by the venom gland.</text>
</comment>
<comment type="toxic dose">
    <text evidence="3">LD(50) is 1 mg/kg by intravenous injection into mice.</text>
</comment>
<comment type="similarity">
    <text evidence="5">Belongs to the three-finger toxin family. Short-chain subfamily. Type III alpha-neurotoxin sub-subfamily.</text>
</comment>
<keyword id="KW-0008">Acetylcholine receptor inhibiting toxin</keyword>
<keyword id="KW-1015">Disulfide bond</keyword>
<keyword id="KW-0872">Ion channel impairing toxin</keyword>
<keyword id="KW-0528">Neurotoxin</keyword>
<keyword id="KW-0629">Postsynaptic neurotoxin</keyword>
<keyword id="KW-1185">Reference proteome</keyword>
<keyword id="KW-0964">Secreted</keyword>
<keyword id="KW-0732">Signal</keyword>
<keyword id="KW-0800">Toxin</keyword>
<protein>
    <recommendedName>
        <fullName>Short neurotoxin 3</fullName>
        <shortName>SNTX3</shortName>
    </recommendedName>
    <alternativeName>
        <fullName>Alpha-neurotoxin 3</fullName>
    </alternativeName>
</protein>